<reference key="1">
    <citation type="journal article" date="2005" name="Nature">
        <title>The genome of the social amoeba Dictyostelium discoideum.</title>
        <authorList>
            <person name="Eichinger L."/>
            <person name="Pachebat J.A."/>
            <person name="Gloeckner G."/>
            <person name="Rajandream M.A."/>
            <person name="Sucgang R."/>
            <person name="Berriman M."/>
            <person name="Song J."/>
            <person name="Olsen R."/>
            <person name="Szafranski K."/>
            <person name="Xu Q."/>
            <person name="Tunggal B."/>
            <person name="Kummerfeld S."/>
            <person name="Madera M."/>
            <person name="Konfortov B.A."/>
            <person name="Rivero F."/>
            <person name="Bankier A.T."/>
            <person name="Lehmann R."/>
            <person name="Hamlin N."/>
            <person name="Davies R."/>
            <person name="Gaudet P."/>
            <person name="Fey P."/>
            <person name="Pilcher K."/>
            <person name="Chen G."/>
            <person name="Saunders D."/>
            <person name="Sodergren E.J."/>
            <person name="Davis P."/>
            <person name="Kerhornou A."/>
            <person name="Nie X."/>
            <person name="Hall N."/>
            <person name="Anjard C."/>
            <person name="Hemphill L."/>
            <person name="Bason N."/>
            <person name="Farbrother P."/>
            <person name="Desany B."/>
            <person name="Just E."/>
            <person name="Morio T."/>
            <person name="Rost R."/>
            <person name="Churcher C.M."/>
            <person name="Cooper J."/>
            <person name="Haydock S."/>
            <person name="van Driessche N."/>
            <person name="Cronin A."/>
            <person name="Goodhead I."/>
            <person name="Muzny D.M."/>
            <person name="Mourier T."/>
            <person name="Pain A."/>
            <person name="Lu M."/>
            <person name="Harper D."/>
            <person name="Lindsay R."/>
            <person name="Hauser H."/>
            <person name="James K.D."/>
            <person name="Quiles M."/>
            <person name="Madan Babu M."/>
            <person name="Saito T."/>
            <person name="Buchrieser C."/>
            <person name="Wardroper A."/>
            <person name="Felder M."/>
            <person name="Thangavelu M."/>
            <person name="Johnson D."/>
            <person name="Knights A."/>
            <person name="Loulseged H."/>
            <person name="Mungall K.L."/>
            <person name="Oliver K."/>
            <person name="Price C."/>
            <person name="Quail M.A."/>
            <person name="Urushihara H."/>
            <person name="Hernandez J."/>
            <person name="Rabbinowitsch E."/>
            <person name="Steffen D."/>
            <person name="Sanders M."/>
            <person name="Ma J."/>
            <person name="Kohara Y."/>
            <person name="Sharp S."/>
            <person name="Simmonds M.N."/>
            <person name="Spiegler S."/>
            <person name="Tivey A."/>
            <person name="Sugano S."/>
            <person name="White B."/>
            <person name="Walker D."/>
            <person name="Woodward J.R."/>
            <person name="Winckler T."/>
            <person name="Tanaka Y."/>
            <person name="Shaulsky G."/>
            <person name="Schleicher M."/>
            <person name="Weinstock G.M."/>
            <person name="Rosenthal A."/>
            <person name="Cox E.C."/>
            <person name="Chisholm R.L."/>
            <person name="Gibbs R.A."/>
            <person name="Loomis W.F."/>
            <person name="Platzer M."/>
            <person name="Kay R.R."/>
            <person name="Williams J.G."/>
            <person name="Dear P.H."/>
            <person name="Noegel A.A."/>
            <person name="Barrell B.G."/>
            <person name="Kuspa A."/>
        </authorList>
    </citation>
    <scope>NUCLEOTIDE SEQUENCE [LARGE SCALE GENOMIC DNA]</scope>
    <source>
        <strain>AX4</strain>
    </source>
</reference>
<gene>
    <name type="ORF">DDB_G0267764</name>
</gene>
<feature type="chain" id="PRO_0000348196" description="Uncharacterized protein DDB_G0267764">
    <location>
        <begin position="1"/>
        <end position="408"/>
    </location>
</feature>
<feature type="region of interest" description="Disordered" evidence="1">
    <location>
        <begin position="184"/>
        <end position="206"/>
    </location>
</feature>
<feature type="region of interest" description="Disordered" evidence="1">
    <location>
        <begin position="254"/>
        <end position="317"/>
    </location>
</feature>
<feature type="compositionally biased region" description="Low complexity" evidence="1">
    <location>
        <begin position="187"/>
        <end position="206"/>
    </location>
</feature>
<protein>
    <recommendedName>
        <fullName>Uncharacterized protein DDB_G0267764</fullName>
    </recommendedName>
</protein>
<evidence type="ECO:0000256" key="1">
    <source>
        <dbReference type="SAM" id="MobiDB-lite"/>
    </source>
</evidence>
<dbReference type="EMBL" id="AAFI02000003">
    <property type="protein sequence ID" value="EAL73335.1"/>
    <property type="molecule type" value="Genomic_DNA"/>
</dbReference>
<dbReference type="RefSeq" id="XP_647290.1">
    <property type="nucleotide sequence ID" value="XM_642198.1"/>
</dbReference>
<dbReference type="PaxDb" id="44689-DDB0189527"/>
<dbReference type="EnsemblProtists" id="EAL73335">
    <property type="protein sequence ID" value="EAL73335"/>
    <property type="gene ID" value="DDB_G0267764"/>
</dbReference>
<dbReference type="GeneID" id="8616096"/>
<dbReference type="KEGG" id="ddi:DDB_G0267764"/>
<dbReference type="dictyBase" id="DDB_G0267764"/>
<dbReference type="VEuPathDB" id="AmoebaDB:DDB_G0267764"/>
<dbReference type="HOGENOM" id="CLU_675154_0_0_1"/>
<dbReference type="InParanoid" id="Q55G94"/>
<dbReference type="PRO" id="PR:Q55G94"/>
<dbReference type="Proteomes" id="UP000002195">
    <property type="component" value="Chromosome 1"/>
</dbReference>
<accession>Q55G94</accession>
<organism>
    <name type="scientific">Dictyostelium discoideum</name>
    <name type="common">Social amoeba</name>
    <dbReference type="NCBI Taxonomy" id="44689"/>
    <lineage>
        <taxon>Eukaryota</taxon>
        <taxon>Amoebozoa</taxon>
        <taxon>Evosea</taxon>
        <taxon>Eumycetozoa</taxon>
        <taxon>Dictyostelia</taxon>
        <taxon>Dictyosteliales</taxon>
        <taxon>Dictyosteliaceae</taxon>
        <taxon>Dictyostelium</taxon>
    </lineage>
</organism>
<sequence>MVFISTKEFNNMEYGTILINAIDAIDSDNNSKLLIDDQVVEIFRKESSSYEHTDHGRLIIVVVENSRKIERRSPTFSYSEKGKGIPFKIDKIPFEFKKKKFIDNLSSMSYHEISLKYNDDDKPNQVVLRHFYKNSLQMGFFNCTLLFRSSPKTTSKTFTKRPELMLTIVDSSGQLIKTIYINRDENNNNSNNNNNNNSNNNSSILFNSSDSLETTLTTSSSSSTSTNQNSNSFNNLLSLLPSLNLQIQSQLINNNKTNNNNNCDVIINNDNGNNNNNNNNNNNNNNNNNNNNNNNNNNNNNNNNNNNNNNNNNSSDSIIVNDNYFNNDNSNDIIVNVNNNFNNNNPNCNIDNGNFIYFNNHDNDNNNKLDYYDELYSIYNIGGQTFDYDICNINNNYFNFNEINMIQN</sequence>
<keyword id="KW-1185">Reference proteome</keyword>
<proteinExistence type="predicted"/>
<name>Y9527_DICDI</name>